<organism>
    <name type="scientific">Xanthomonas oryzae pv. oryzae (strain PXO99A)</name>
    <dbReference type="NCBI Taxonomy" id="360094"/>
    <lineage>
        <taxon>Bacteria</taxon>
        <taxon>Pseudomonadati</taxon>
        <taxon>Pseudomonadota</taxon>
        <taxon>Gammaproteobacteria</taxon>
        <taxon>Lysobacterales</taxon>
        <taxon>Lysobacteraceae</taxon>
        <taxon>Xanthomonas</taxon>
    </lineage>
</organism>
<sequence length="546" mass="57156">MAAKDIRFGEDARTRMVRGVNVLANAVKATLGPKGRNVVLEKSFGAPTITKDGVSVAKEIELADKFENMGAQMVKEVASKTNDNAGDGTTTATVLAQALIREGAKAVAAGMNPMDLKRGIDQAVKAAVVELKNISKPTTDDKAIAQVGTISANSDESIGNIIAEAMKKVGKEGVITVEEGSGLENELDVVEGMQFDRGYLSPYFINNQQSQSADLDDPFILLHDKKISNVRDLLPVLEGVAKAGKPLLIVAEEVEGEALATLVVNTIRGIVKVVAVKAPGFGDRRKAMLEDMAVLTGGTVISEEVGLALEKATIKDLGRAKKVQVSKENTTIIDGAGDSAAIESRVGQIKTQIEDTSSDYDREKLQERVAKLAGGVAVIKVGASTEIEMKEKKARVEDALHATRAAVEEGVVPGGGVALVRALVAVGNLTGANEDQTHGIQIALRAMEAPLREIVANAGEEPSVILNKVKEGTGNYGYNAANGEFGDMVEFGILDPTKVTRSALQNAASIAGLMITTEAMVADAPKKDEPAMPAGGGMGGMGGMDF</sequence>
<protein>
    <recommendedName>
        <fullName evidence="1">Chaperonin GroEL</fullName>
        <ecNumber evidence="1">5.6.1.7</ecNumber>
    </recommendedName>
    <alternativeName>
        <fullName evidence="1">60 kDa chaperonin</fullName>
    </alternativeName>
    <alternativeName>
        <fullName evidence="1">Chaperonin-60</fullName>
        <shortName evidence="1">Cpn60</shortName>
    </alternativeName>
</protein>
<gene>
    <name evidence="1" type="primary">groEL</name>
    <name evidence="1" type="synonym">groL</name>
    <name type="ordered locus">PXO_03703</name>
</gene>
<reference key="1">
    <citation type="journal article" date="2008" name="BMC Genomics">
        <title>Genome sequence and rapid evolution of the rice pathogen Xanthomonas oryzae pv. oryzae PXO99A.</title>
        <authorList>
            <person name="Salzberg S.L."/>
            <person name="Sommer D.D."/>
            <person name="Schatz M.C."/>
            <person name="Phillippy A.M."/>
            <person name="Rabinowicz P.D."/>
            <person name="Tsuge S."/>
            <person name="Furutani A."/>
            <person name="Ochiai H."/>
            <person name="Delcher A.L."/>
            <person name="Kelley D."/>
            <person name="Madupu R."/>
            <person name="Puiu D."/>
            <person name="Radune D."/>
            <person name="Shumway M."/>
            <person name="Trapnell C."/>
            <person name="Aparna G."/>
            <person name="Jha G."/>
            <person name="Pandey A."/>
            <person name="Patil P.B."/>
            <person name="Ishihara H."/>
            <person name="Meyer D.F."/>
            <person name="Szurek B."/>
            <person name="Verdier V."/>
            <person name="Koebnik R."/>
            <person name="Dow J.M."/>
            <person name="Ryan R.P."/>
            <person name="Hirata H."/>
            <person name="Tsuyumu S."/>
            <person name="Won Lee S."/>
            <person name="Seo Y.-S."/>
            <person name="Sriariyanum M."/>
            <person name="Ronald P.C."/>
            <person name="Sonti R.V."/>
            <person name="Van Sluys M.-A."/>
            <person name="Leach J.E."/>
            <person name="White F.F."/>
            <person name="Bogdanove A.J."/>
        </authorList>
    </citation>
    <scope>NUCLEOTIDE SEQUENCE [LARGE SCALE GENOMIC DNA]</scope>
    <source>
        <strain>PXO99A</strain>
    </source>
</reference>
<feature type="chain" id="PRO_1000130079" description="Chaperonin GroEL">
    <location>
        <begin position="1"/>
        <end position="546"/>
    </location>
</feature>
<feature type="region of interest" description="Disordered" evidence="2">
    <location>
        <begin position="526"/>
        <end position="546"/>
    </location>
</feature>
<feature type="compositionally biased region" description="Gly residues" evidence="2">
    <location>
        <begin position="534"/>
        <end position="546"/>
    </location>
</feature>
<feature type="binding site" evidence="1">
    <location>
        <begin position="30"/>
        <end position="33"/>
    </location>
    <ligand>
        <name>ATP</name>
        <dbReference type="ChEBI" id="CHEBI:30616"/>
    </ligand>
</feature>
<feature type="binding site" evidence="1">
    <location>
        <position position="51"/>
    </location>
    <ligand>
        <name>ATP</name>
        <dbReference type="ChEBI" id="CHEBI:30616"/>
    </ligand>
</feature>
<feature type="binding site" evidence="1">
    <location>
        <begin position="87"/>
        <end position="91"/>
    </location>
    <ligand>
        <name>ATP</name>
        <dbReference type="ChEBI" id="CHEBI:30616"/>
    </ligand>
</feature>
<feature type="binding site" evidence="1">
    <location>
        <position position="415"/>
    </location>
    <ligand>
        <name>ATP</name>
        <dbReference type="ChEBI" id="CHEBI:30616"/>
    </ligand>
</feature>
<feature type="binding site" evidence="1">
    <location>
        <begin position="479"/>
        <end position="481"/>
    </location>
    <ligand>
        <name>ATP</name>
        <dbReference type="ChEBI" id="CHEBI:30616"/>
    </ligand>
</feature>
<feature type="binding site" evidence="1">
    <location>
        <position position="495"/>
    </location>
    <ligand>
        <name>ATP</name>
        <dbReference type="ChEBI" id="CHEBI:30616"/>
    </ligand>
</feature>
<name>CH60_XANOP</name>
<evidence type="ECO:0000255" key="1">
    <source>
        <dbReference type="HAMAP-Rule" id="MF_00600"/>
    </source>
</evidence>
<evidence type="ECO:0000256" key="2">
    <source>
        <dbReference type="SAM" id="MobiDB-lite"/>
    </source>
</evidence>
<keyword id="KW-0067">ATP-binding</keyword>
<keyword id="KW-0143">Chaperone</keyword>
<keyword id="KW-0963">Cytoplasm</keyword>
<keyword id="KW-0413">Isomerase</keyword>
<keyword id="KW-0547">Nucleotide-binding</keyword>
<dbReference type="EC" id="5.6.1.7" evidence="1"/>
<dbReference type="EMBL" id="CP000967">
    <property type="protein sequence ID" value="ACD57162.1"/>
    <property type="molecule type" value="Genomic_DNA"/>
</dbReference>
<dbReference type="RefSeq" id="WP_011260602.1">
    <property type="nucleotide sequence ID" value="NC_010717.2"/>
</dbReference>
<dbReference type="SMR" id="B2SJG4"/>
<dbReference type="KEGG" id="xop:PXO_03703"/>
<dbReference type="eggNOG" id="COG0459">
    <property type="taxonomic scope" value="Bacteria"/>
</dbReference>
<dbReference type="HOGENOM" id="CLU_016503_3_0_6"/>
<dbReference type="Proteomes" id="UP000001740">
    <property type="component" value="Chromosome"/>
</dbReference>
<dbReference type="GO" id="GO:0005737">
    <property type="term" value="C:cytoplasm"/>
    <property type="evidence" value="ECO:0007669"/>
    <property type="project" value="UniProtKB-SubCell"/>
</dbReference>
<dbReference type="GO" id="GO:0005524">
    <property type="term" value="F:ATP binding"/>
    <property type="evidence" value="ECO:0007669"/>
    <property type="project" value="UniProtKB-UniRule"/>
</dbReference>
<dbReference type="GO" id="GO:0140662">
    <property type="term" value="F:ATP-dependent protein folding chaperone"/>
    <property type="evidence" value="ECO:0007669"/>
    <property type="project" value="InterPro"/>
</dbReference>
<dbReference type="GO" id="GO:0016853">
    <property type="term" value="F:isomerase activity"/>
    <property type="evidence" value="ECO:0007669"/>
    <property type="project" value="UniProtKB-KW"/>
</dbReference>
<dbReference type="GO" id="GO:0051082">
    <property type="term" value="F:unfolded protein binding"/>
    <property type="evidence" value="ECO:0007669"/>
    <property type="project" value="UniProtKB-UniRule"/>
</dbReference>
<dbReference type="GO" id="GO:0042026">
    <property type="term" value="P:protein refolding"/>
    <property type="evidence" value="ECO:0007669"/>
    <property type="project" value="UniProtKB-UniRule"/>
</dbReference>
<dbReference type="CDD" id="cd03344">
    <property type="entry name" value="GroEL"/>
    <property type="match status" value="1"/>
</dbReference>
<dbReference type="FunFam" id="1.10.560.10:FF:000001">
    <property type="entry name" value="60 kDa chaperonin"/>
    <property type="match status" value="1"/>
</dbReference>
<dbReference type="FunFam" id="3.50.7.10:FF:000001">
    <property type="entry name" value="60 kDa chaperonin"/>
    <property type="match status" value="1"/>
</dbReference>
<dbReference type="Gene3D" id="3.50.7.10">
    <property type="entry name" value="GroEL"/>
    <property type="match status" value="1"/>
</dbReference>
<dbReference type="Gene3D" id="1.10.560.10">
    <property type="entry name" value="GroEL-like equatorial domain"/>
    <property type="match status" value="1"/>
</dbReference>
<dbReference type="Gene3D" id="3.30.260.10">
    <property type="entry name" value="TCP-1-like chaperonin intermediate domain"/>
    <property type="match status" value="1"/>
</dbReference>
<dbReference type="HAMAP" id="MF_00600">
    <property type="entry name" value="CH60"/>
    <property type="match status" value="1"/>
</dbReference>
<dbReference type="InterPro" id="IPR018370">
    <property type="entry name" value="Chaperonin_Cpn60_CS"/>
</dbReference>
<dbReference type="InterPro" id="IPR001844">
    <property type="entry name" value="Cpn60/GroEL"/>
</dbReference>
<dbReference type="InterPro" id="IPR002423">
    <property type="entry name" value="Cpn60/GroEL/TCP-1"/>
</dbReference>
<dbReference type="InterPro" id="IPR027409">
    <property type="entry name" value="GroEL-like_apical_dom_sf"/>
</dbReference>
<dbReference type="InterPro" id="IPR027413">
    <property type="entry name" value="GROEL-like_equatorial_sf"/>
</dbReference>
<dbReference type="InterPro" id="IPR027410">
    <property type="entry name" value="TCP-1-like_intermed_sf"/>
</dbReference>
<dbReference type="NCBIfam" id="TIGR02348">
    <property type="entry name" value="GroEL"/>
    <property type="match status" value="1"/>
</dbReference>
<dbReference type="NCBIfam" id="NF000592">
    <property type="entry name" value="PRK00013.1"/>
    <property type="match status" value="1"/>
</dbReference>
<dbReference type="NCBIfam" id="NF009487">
    <property type="entry name" value="PRK12849.1"/>
    <property type="match status" value="1"/>
</dbReference>
<dbReference type="NCBIfam" id="NF009488">
    <property type="entry name" value="PRK12850.1"/>
    <property type="match status" value="1"/>
</dbReference>
<dbReference type="NCBIfam" id="NF009489">
    <property type="entry name" value="PRK12851.1"/>
    <property type="match status" value="1"/>
</dbReference>
<dbReference type="PANTHER" id="PTHR45633">
    <property type="entry name" value="60 KDA HEAT SHOCK PROTEIN, MITOCHONDRIAL"/>
    <property type="match status" value="1"/>
</dbReference>
<dbReference type="Pfam" id="PF00118">
    <property type="entry name" value="Cpn60_TCP1"/>
    <property type="match status" value="1"/>
</dbReference>
<dbReference type="PRINTS" id="PR00298">
    <property type="entry name" value="CHAPERONIN60"/>
</dbReference>
<dbReference type="SUPFAM" id="SSF52029">
    <property type="entry name" value="GroEL apical domain-like"/>
    <property type="match status" value="1"/>
</dbReference>
<dbReference type="SUPFAM" id="SSF48592">
    <property type="entry name" value="GroEL equatorial domain-like"/>
    <property type="match status" value="1"/>
</dbReference>
<dbReference type="SUPFAM" id="SSF54849">
    <property type="entry name" value="GroEL-intermediate domain like"/>
    <property type="match status" value="1"/>
</dbReference>
<dbReference type="PROSITE" id="PS00296">
    <property type="entry name" value="CHAPERONINS_CPN60"/>
    <property type="match status" value="1"/>
</dbReference>
<comment type="function">
    <text evidence="1">Together with its co-chaperonin GroES, plays an essential role in assisting protein folding. The GroEL-GroES system forms a nano-cage that allows encapsulation of the non-native substrate proteins and provides a physical environment optimized to promote and accelerate protein folding.</text>
</comment>
<comment type="catalytic activity">
    <reaction evidence="1">
        <text>ATP + H2O + a folded polypeptide = ADP + phosphate + an unfolded polypeptide.</text>
        <dbReference type="EC" id="5.6.1.7"/>
    </reaction>
</comment>
<comment type="subunit">
    <text evidence="1">Forms a cylinder of 14 subunits composed of two heptameric rings stacked back-to-back. Interacts with the co-chaperonin GroES.</text>
</comment>
<comment type="subcellular location">
    <subcellularLocation>
        <location evidence="1">Cytoplasm</location>
    </subcellularLocation>
</comment>
<comment type="similarity">
    <text evidence="1">Belongs to the chaperonin (HSP60) family.</text>
</comment>
<accession>B2SJG4</accession>
<proteinExistence type="inferred from homology"/>